<organism>
    <name type="scientific">Simian immunodeficiency virus agm.vervet (isolate AGM155)</name>
    <name type="common">SIV-agm.ver</name>
    <name type="synonym">Simian immunodeficiency virus African green monkey vervet</name>
    <dbReference type="NCBI Taxonomy" id="11727"/>
    <lineage>
        <taxon>Viruses</taxon>
        <taxon>Riboviria</taxon>
        <taxon>Pararnavirae</taxon>
        <taxon>Artverviricota</taxon>
        <taxon>Revtraviricetes</taxon>
        <taxon>Ortervirales</taxon>
        <taxon>Retroviridae</taxon>
        <taxon>Orthoretrovirinae</taxon>
        <taxon>Lentivirus</taxon>
        <taxon>Simian immunodeficiency virus</taxon>
    </lineage>
</organism>
<protein>
    <recommendedName>
        <fullName>Gag polyprotein</fullName>
    </recommendedName>
    <alternativeName>
        <fullName>Pr55Gag</fullName>
    </alternativeName>
    <component>
        <recommendedName>
            <fullName>Matrix protein p17</fullName>
            <shortName>MA</shortName>
        </recommendedName>
    </component>
    <component>
        <recommendedName>
            <fullName>Capsid protein p24</fullName>
            <shortName>CA</shortName>
        </recommendedName>
    </component>
    <component>
        <recommendedName>
            <fullName>Spacer peptide p2</fullName>
        </recommendedName>
    </component>
    <component>
        <recommendedName>
            <fullName>Nucleocapsid protein p7</fullName>
            <shortName>NC</shortName>
        </recommendedName>
    </component>
    <component>
        <recommendedName>
            <fullName>Spacer peptide p1</fullName>
        </recommendedName>
    </component>
    <component>
        <recommendedName>
            <fullName>p6-gag</fullName>
        </recommendedName>
    </component>
</protein>
<dbReference type="EMBL" id="M29975">
    <property type="protein sequence ID" value="AAA91905.1"/>
    <property type="molecule type" value="Genomic_RNA"/>
</dbReference>
<dbReference type="SMR" id="P27972"/>
<dbReference type="PRO" id="PR:P27972"/>
<dbReference type="Proteomes" id="UP000258159">
    <property type="component" value="Segment"/>
</dbReference>
<dbReference type="GO" id="GO:0030430">
    <property type="term" value="C:host cell cytoplasm"/>
    <property type="evidence" value="ECO:0007669"/>
    <property type="project" value="UniProtKB-SubCell"/>
</dbReference>
<dbReference type="GO" id="GO:0042025">
    <property type="term" value="C:host cell nucleus"/>
    <property type="evidence" value="ECO:0007669"/>
    <property type="project" value="UniProtKB-SubCell"/>
</dbReference>
<dbReference type="GO" id="GO:0019013">
    <property type="term" value="C:viral nucleocapsid"/>
    <property type="evidence" value="ECO:0007669"/>
    <property type="project" value="UniProtKB-KW"/>
</dbReference>
<dbReference type="GO" id="GO:0003723">
    <property type="term" value="F:RNA binding"/>
    <property type="evidence" value="ECO:0007669"/>
    <property type="project" value="UniProtKB-KW"/>
</dbReference>
<dbReference type="GO" id="GO:0005198">
    <property type="term" value="F:structural molecule activity"/>
    <property type="evidence" value="ECO:0007669"/>
    <property type="project" value="InterPro"/>
</dbReference>
<dbReference type="GO" id="GO:0008270">
    <property type="term" value="F:zinc ion binding"/>
    <property type="evidence" value="ECO:0007669"/>
    <property type="project" value="UniProtKB-KW"/>
</dbReference>
<dbReference type="GO" id="GO:0039702">
    <property type="term" value="P:viral budding via host ESCRT complex"/>
    <property type="evidence" value="ECO:0007669"/>
    <property type="project" value="UniProtKB-KW"/>
</dbReference>
<dbReference type="GO" id="GO:0075523">
    <property type="term" value="P:viral translational frameshifting"/>
    <property type="evidence" value="ECO:0007669"/>
    <property type="project" value="UniProtKB-KW"/>
</dbReference>
<dbReference type="Gene3D" id="1.10.1200.30">
    <property type="match status" value="1"/>
</dbReference>
<dbReference type="Gene3D" id="1.10.375.10">
    <property type="entry name" value="Human Immunodeficiency Virus Type 1 Capsid Protein"/>
    <property type="match status" value="1"/>
</dbReference>
<dbReference type="Gene3D" id="1.10.150.90">
    <property type="entry name" value="Immunodeficiency lentiviruses, gag gene matrix protein p17"/>
    <property type="match status" value="1"/>
</dbReference>
<dbReference type="Gene3D" id="1.20.5.760">
    <property type="entry name" value="Single helix bin"/>
    <property type="match status" value="1"/>
</dbReference>
<dbReference type="Gene3D" id="4.10.60.10">
    <property type="entry name" value="Zinc finger, CCHC-type"/>
    <property type="match status" value="1"/>
</dbReference>
<dbReference type="InterPro" id="IPR045345">
    <property type="entry name" value="Gag_p24_C"/>
</dbReference>
<dbReference type="InterPro" id="IPR000071">
    <property type="entry name" value="Lentvrl_matrix_N"/>
</dbReference>
<dbReference type="InterPro" id="IPR012344">
    <property type="entry name" value="Matrix_HIV/RSV_N"/>
</dbReference>
<dbReference type="InterPro" id="IPR050195">
    <property type="entry name" value="Primate_lentivir_Gag_pol-like"/>
</dbReference>
<dbReference type="InterPro" id="IPR008916">
    <property type="entry name" value="Retrov_capsid_C"/>
</dbReference>
<dbReference type="InterPro" id="IPR008919">
    <property type="entry name" value="Retrov_capsid_N"/>
</dbReference>
<dbReference type="InterPro" id="IPR010999">
    <property type="entry name" value="Retrovr_matrix"/>
</dbReference>
<dbReference type="InterPro" id="IPR001878">
    <property type="entry name" value="Znf_CCHC"/>
</dbReference>
<dbReference type="InterPro" id="IPR036875">
    <property type="entry name" value="Znf_CCHC_sf"/>
</dbReference>
<dbReference type="PANTHER" id="PTHR40389">
    <property type="entry name" value="ENDOGENOUS RETROVIRUS GROUP K MEMBER 24 GAG POLYPROTEIN-RELATED"/>
    <property type="match status" value="1"/>
</dbReference>
<dbReference type="PANTHER" id="PTHR40389:SF3">
    <property type="entry name" value="IGE-BINDING PROTEIN"/>
    <property type="match status" value="1"/>
</dbReference>
<dbReference type="Pfam" id="PF00540">
    <property type="entry name" value="Gag_p17"/>
    <property type="match status" value="1"/>
</dbReference>
<dbReference type="Pfam" id="PF00607">
    <property type="entry name" value="Gag_p24"/>
    <property type="match status" value="1"/>
</dbReference>
<dbReference type="Pfam" id="PF19317">
    <property type="entry name" value="Gag_p24_C"/>
    <property type="match status" value="1"/>
</dbReference>
<dbReference type="Pfam" id="PF00098">
    <property type="entry name" value="zf-CCHC"/>
    <property type="match status" value="2"/>
</dbReference>
<dbReference type="PRINTS" id="PR00234">
    <property type="entry name" value="HIV1MATRIX"/>
</dbReference>
<dbReference type="SMART" id="SM00343">
    <property type="entry name" value="ZnF_C2HC"/>
    <property type="match status" value="2"/>
</dbReference>
<dbReference type="SUPFAM" id="SSF47836">
    <property type="entry name" value="Retroviral matrix proteins"/>
    <property type="match status" value="1"/>
</dbReference>
<dbReference type="SUPFAM" id="SSF47353">
    <property type="entry name" value="Retrovirus capsid dimerization domain-like"/>
    <property type="match status" value="1"/>
</dbReference>
<dbReference type="SUPFAM" id="SSF47943">
    <property type="entry name" value="Retrovirus capsid protein, N-terminal core domain"/>
    <property type="match status" value="1"/>
</dbReference>
<dbReference type="SUPFAM" id="SSF57756">
    <property type="entry name" value="Retrovirus zinc finger-like domains"/>
    <property type="match status" value="1"/>
</dbReference>
<dbReference type="PROSITE" id="PS50158">
    <property type="entry name" value="ZF_CCHC"/>
    <property type="match status" value="2"/>
</dbReference>
<accession>P27972</accession>
<name>GAG_SIVV1</name>
<gene>
    <name type="primary">gag</name>
</gene>
<proteinExistence type="inferred from homology"/>
<comment type="function">
    <text evidence="1">Matrix protein p17 targets Gag and Gag-Pol polyproteins to the plasma membrane via a multipartite membrane binding signal, that includes its myristoylated N-terminus. Also mediates nuclear localization of the preintegration complex. Implicated in the release from host cell mediated by Vpu (By similarity).</text>
</comment>
<comment type="function">
    <text evidence="1">Capsid protein p24 forms the conical core of the virus that encapsulates the genomic RNA-nucleocapsid complex.</text>
</comment>
<comment type="function">
    <text evidence="1">Nucleocapsid protein p7 encapsulates and protects viral dimeric unspliced (genomic) RNA. Binds these RNAs through its zinc fingers (By similarity).</text>
</comment>
<comment type="function">
    <text evidence="1">p6-gag plays a role in budding of the assembled particle by interacting with the host class E VPS proteins TSG101 and PDCD6IP/AIP1.</text>
</comment>
<comment type="subunit">
    <molecule>Matrix protein p17</molecule>
    <text evidence="2 4">Homotrimer. Interacts with gp41 (via C-terminus).</text>
</comment>
<comment type="subunit">
    <molecule>p6-gag</molecule>
    <text evidence="4">Interacts with host TSG101 (By similarity).</text>
</comment>
<comment type="subcellular location">
    <molecule>Matrix protein p17</molecule>
    <subcellularLocation>
        <location evidence="7">Virion</location>
    </subcellularLocation>
    <subcellularLocation>
        <location evidence="1">Host nucleus</location>
    </subcellularLocation>
    <subcellularLocation>
        <location evidence="1">Host cytoplasm</location>
    </subcellularLocation>
    <text evidence="1">Following virus entry, the nuclear localization signal (NLS) of the matrix protein participates with Vpr to the nuclear localization of the viral genome. During virus production, the nuclear export activity of the matrix protein counteracts the NLS to maintain the Gag and Gag-Pol polyproteins in the cytoplasm, thereby directing unspliced RNA to the plasma membrane (By similarity).</text>
</comment>
<comment type="subcellular location">
    <molecule>Capsid protein p24</molecule>
    <subcellularLocation>
        <location evidence="7">Virion</location>
    </subcellularLocation>
</comment>
<comment type="subcellular location">
    <molecule>Nucleocapsid protein p7</molecule>
    <subcellularLocation>
        <location evidence="7">Virion</location>
    </subcellularLocation>
</comment>
<comment type="alternative products">
    <event type="ribosomal frameshifting"/>
    <isoform>
        <id>P27972-1</id>
        <name>Gag polyprotein</name>
        <sequence type="displayed"/>
    </isoform>
    <isoform>
        <id>P27973-1</id>
        <name>Gag-Pol polyprotein</name>
        <sequence type="external"/>
    </isoform>
    <text>Translation results in the formation of the Gag polyprotein most of the time. Ribosomal frameshifting at the gag-pol genes boundary occurs at low frequency and produces the Gag-Pol polyprotein. This strategy of translation probably allows the virus to modulate the quantity of each viral protein. Maintenance of a correct Gag to Gag-Pol ratio is essential for RNA dimerization and viral infectivity.</text>
</comment>
<comment type="domain">
    <text evidence="3">Late-budding domains (L domains) are short sequence motifs essential for viral particle budding. They recruit proteins of the host ESCRT machinery (Endosomal Sorting Complex Required for Transport) or ESCRT-associated proteins. p6-gag contains one L domain: a PTAP/PSAP motif, which interacts with the UEV domain of TSG101.</text>
</comment>
<comment type="PTM">
    <text evidence="1">Capsid protein p24 is phosphorylated.</text>
</comment>
<comment type="PTM">
    <text evidence="1">Specific enzymatic cleavages by the viral protease yield mature proteins. The polyprotein is cleaved during and after budding, this process is termed maturation (By similarity).</text>
</comment>
<comment type="miscellaneous">
    <molecule>Isoform Gag polyprotein</molecule>
    <text>Produced by conventional translation.</text>
</comment>
<comment type="similarity">
    <text evidence="7">Belongs to the primate lentivirus group gag polyprotein family.</text>
</comment>
<organismHost>
    <name type="scientific">Cercopithecidae</name>
    <name type="common">Old World monkeys</name>
    <dbReference type="NCBI Taxonomy" id="9527"/>
</organismHost>
<reference key="1">
    <citation type="journal article" date="1990" name="J. Virol.">
        <title>Simian immunodeficiency viruses from African green monkeys display unusual genetic diversity.</title>
        <authorList>
            <person name="Johnson P.R."/>
            <person name="Fomsgaard A."/>
            <person name="Allan J.S."/>
            <person name="Gravell M."/>
            <person name="London W.T."/>
            <person name="Olmstead R.A."/>
            <person name="Hirsch V.M."/>
        </authorList>
    </citation>
    <scope>NUCLEOTIDE SEQUENCE [GENOMIC RNA]</scope>
</reference>
<evidence type="ECO:0000250" key="1"/>
<evidence type="ECO:0000250" key="2">
    <source>
        <dbReference type="UniProtKB" id="P04591"/>
    </source>
</evidence>
<evidence type="ECO:0000250" key="3">
    <source>
        <dbReference type="UniProtKB" id="P05893"/>
    </source>
</evidence>
<evidence type="ECO:0000250" key="4">
    <source>
        <dbReference type="UniProtKB" id="P12493"/>
    </source>
</evidence>
<evidence type="ECO:0000255" key="5">
    <source>
        <dbReference type="PROSITE-ProRule" id="PRU00047"/>
    </source>
</evidence>
<evidence type="ECO:0000256" key="6">
    <source>
        <dbReference type="SAM" id="MobiDB-lite"/>
    </source>
</evidence>
<evidence type="ECO:0000305" key="7"/>
<sequence length="520" mass="57735">MGAATSALNRRQLDEFEHIRLRPNGKKKYQIKHLIWAGKKMDRFGLHEKLLETEEGCKKIIEVLSPLEPTGSEGMKSLYNLVCVLLCVHQEKKVKDTEEALAIVRQCCHLVDKEKTAVTPPGGQQKNNTGGTATPGGSQNFPAQQQGNAWVHVPLSPRTLNAWVKAVEEKKFGAEIVPMFQALSEGCTPYDINQMLNVLGDHQGALQIVKEIINEEAAQWDVTHPPPAGPLPAGQLRDPGGSDIAGTTSTVQEQLEWIYTANPRVDVGAIYRRWIILGLQKCVKMYNPVSVLDIRQGPKEPFKDYVDRFYKAIRAEQASGEVKQWMTESLLIQNANPDCKVILKGLGMHPTLEEMLTACQGVGGPSYKAKVMAEMMQNLQSQNMVQQGGGRGRPRPPPKCYNCGKFGHMQRQCPEPRKIKCLKCGKPGHLAKDCRGQVNFLGYGRWMGTKPRNFPAATLGAEPSAPPPPNNSTPYDPAKKLLQQYAEKGKQMRNQNRNPPANNPDWNEGYSLNSLFGEDQ</sequence>
<keyword id="KW-0167">Capsid protein</keyword>
<keyword id="KW-1035">Host cytoplasm</keyword>
<keyword id="KW-1048">Host nucleus</keyword>
<keyword id="KW-0945">Host-virus interaction</keyword>
<keyword id="KW-0449">Lipoprotein</keyword>
<keyword id="KW-0479">Metal-binding</keyword>
<keyword id="KW-0519">Myristate</keyword>
<keyword id="KW-0597">Phosphoprotein</keyword>
<keyword id="KW-0677">Repeat</keyword>
<keyword id="KW-0688">Ribosomal frameshifting</keyword>
<keyword id="KW-0694">RNA-binding</keyword>
<keyword id="KW-1198">Viral budding</keyword>
<keyword id="KW-1187">Viral budding via the host ESCRT complexes</keyword>
<keyword id="KW-0543">Viral nucleoprotein</keyword>
<keyword id="KW-1188">Viral release from host cell</keyword>
<keyword id="KW-0946">Virion</keyword>
<keyword id="KW-0862">Zinc</keyword>
<keyword id="KW-0863">Zinc-finger</keyword>
<feature type="initiator methionine" description="Removed; by host" evidence="1">
    <location>
        <position position="1"/>
    </location>
</feature>
<feature type="chain" id="PRO_0000316105" description="Gag polyprotein" evidence="1">
    <location>
        <begin position="2"/>
        <end position="520"/>
    </location>
</feature>
<feature type="chain" id="PRO_0000038619" description="Matrix protein p17" evidence="1">
    <location>
        <begin position="2"/>
        <end position="141"/>
    </location>
</feature>
<feature type="chain" id="PRO_0000038620" description="Capsid protein p24" evidence="1">
    <location>
        <begin position="142"/>
        <end position="372"/>
    </location>
</feature>
<feature type="peptide" id="PRO_0000316106" description="Spacer peptide p2" evidence="1">
    <location>
        <begin position="373"/>
        <end position="386"/>
    </location>
</feature>
<feature type="chain" id="PRO_0000038621" description="Nucleocapsid protein p7" evidence="1">
    <location>
        <begin position="387"/>
        <end position="439"/>
    </location>
</feature>
<feature type="peptide" id="PRO_0000316107" description="Spacer peptide p1" evidence="1">
    <location>
        <begin position="440"/>
        <end position="454"/>
    </location>
</feature>
<feature type="chain" id="PRO_0000316108" description="p6-gag" evidence="1">
    <location>
        <begin position="482"/>
        <end position="520"/>
    </location>
</feature>
<feature type="zinc finger region" description="CCHC-type 1" evidence="5">
    <location>
        <begin position="398"/>
        <end position="415"/>
    </location>
</feature>
<feature type="zinc finger region" description="CCHC-type 2" evidence="5">
    <location>
        <begin position="419"/>
        <end position="436"/>
    </location>
</feature>
<feature type="region of interest" description="Disordered" evidence="6">
    <location>
        <begin position="117"/>
        <end position="144"/>
    </location>
</feature>
<feature type="region of interest" description="Disordered" evidence="6">
    <location>
        <begin position="454"/>
        <end position="520"/>
    </location>
</feature>
<feature type="short sequence motif" description="Nuclear export signal" evidence="1">
    <location>
        <begin position="16"/>
        <end position="22"/>
    </location>
</feature>
<feature type="short sequence motif" description="Nuclear localization signal" evidence="1">
    <location>
        <begin position="26"/>
        <end position="32"/>
    </location>
</feature>
<feature type="short sequence motif" description="PTAP/PSAP motif" evidence="3">
    <location>
        <begin position="463"/>
        <end position="466"/>
    </location>
</feature>
<feature type="compositionally biased region" description="Polar residues" evidence="6">
    <location>
        <begin position="122"/>
        <end position="144"/>
    </location>
</feature>
<feature type="compositionally biased region" description="Low complexity" evidence="6">
    <location>
        <begin position="493"/>
        <end position="504"/>
    </location>
</feature>
<feature type="site" description="Cleavage; by viral protease" evidence="1">
    <location>
        <begin position="439"/>
        <end position="440"/>
    </location>
</feature>
<feature type="lipid moiety-binding region" description="N-myristoyl glycine; by host" evidence="1">
    <location>
        <position position="2"/>
    </location>
</feature>